<name>RS9_PSECP</name>
<sequence length="168" mass="18284">MAQNEELTTEAVEAEENPTSYTSESSAAEAAPKKERPALTVAGAAVGRRKEAVARVRVVPGSGKWTINGRALDNYFPNKLHQQDVNEPFKILDLEGAYDVIARIHGGGISGQAGALRLGIARSLNEIDVENNRATLKKAGYLSRDARVIERKKAGLKKARKAQQYSKR</sequence>
<accession>B8HCH9</accession>
<evidence type="ECO:0000255" key="1">
    <source>
        <dbReference type="HAMAP-Rule" id="MF_00532"/>
    </source>
</evidence>
<evidence type="ECO:0000256" key="2">
    <source>
        <dbReference type="SAM" id="MobiDB-lite"/>
    </source>
</evidence>
<evidence type="ECO:0000305" key="3"/>
<dbReference type="EMBL" id="CP001341">
    <property type="protein sequence ID" value="ACL40595.1"/>
    <property type="molecule type" value="Genomic_DNA"/>
</dbReference>
<dbReference type="RefSeq" id="WP_015937804.1">
    <property type="nucleotide sequence ID" value="NC_011886.1"/>
</dbReference>
<dbReference type="SMR" id="B8HCH9"/>
<dbReference type="STRING" id="452863.Achl_2630"/>
<dbReference type="KEGG" id="ach:Achl_2630"/>
<dbReference type="eggNOG" id="COG0103">
    <property type="taxonomic scope" value="Bacteria"/>
</dbReference>
<dbReference type="HOGENOM" id="CLU_046483_2_0_11"/>
<dbReference type="OrthoDB" id="9803965at2"/>
<dbReference type="Proteomes" id="UP000002505">
    <property type="component" value="Chromosome"/>
</dbReference>
<dbReference type="GO" id="GO:0005737">
    <property type="term" value="C:cytoplasm"/>
    <property type="evidence" value="ECO:0007669"/>
    <property type="project" value="UniProtKB-ARBA"/>
</dbReference>
<dbReference type="GO" id="GO:0015935">
    <property type="term" value="C:small ribosomal subunit"/>
    <property type="evidence" value="ECO:0007669"/>
    <property type="project" value="TreeGrafter"/>
</dbReference>
<dbReference type="GO" id="GO:0003723">
    <property type="term" value="F:RNA binding"/>
    <property type="evidence" value="ECO:0007669"/>
    <property type="project" value="TreeGrafter"/>
</dbReference>
<dbReference type="GO" id="GO:0003735">
    <property type="term" value="F:structural constituent of ribosome"/>
    <property type="evidence" value="ECO:0007669"/>
    <property type="project" value="InterPro"/>
</dbReference>
<dbReference type="GO" id="GO:0006412">
    <property type="term" value="P:translation"/>
    <property type="evidence" value="ECO:0007669"/>
    <property type="project" value="UniProtKB-UniRule"/>
</dbReference>
<dbReference type="FunFam" id="3.30.230.10:FF:000001">
    <property type="entry name" value="30S ribosomal protein S9"/>
    <property type="match status" value="1"/>
</dbReference>
<dbReference type="Gene3D" id="3.30.230.10">
    <property type="match status" value="1"/>
</dbReference>
<dbReference type="HAMAP" id="MF_00532_B">
    <property type="entry name" value="Ribosomal_uS9_B"/>
    <property type="match status" value="1"/>
</dbReference>
<dbReference type="InterPro" id="IPR020568">
    <property type="entry name" value="Ribosomal_Su5_D2-typ_SF"/>
</dbReference>
<dbReference type="InterPro" id="IPR000754">
    <property type="entry name" value="Ribosomal_uS9"/>
</dbReference>
<dbReference type="InterPro" id="IPR023035">
    <property type="entry name" value="Ribosomal_uS9_bac/plastid"/>
</dbReference>
<dbReference type="InterPro" id="IPR020574">
    <property type="entry name" value="Ribosomal_uS9_CS"/>
</dbReference>
<dbReference type="InterPro" id="IPR014721">
    <property type="entry name" value="Ribsml_uS5_D2-typ_fold_subgr"/>
</dbReference>
<dbReference type="NCBIfam" id="NF001099">
    <property type="entry name" value="PRK00132.1"/>
    <property type="match status" value="1"/>
</dbReference>
<dbReference type="PANTHER" id="PTHR21569">
    <property type="entry name" value="RIBOSOMAL PROTEIN S9"/>
    <property type="match status" value="1"/>
</dbReference>
<dbReference type="PANTHER" id="PTHR21569:SF1">
    <property type="entry name" value="SMALL RIBOSOMAL SUBUNIT PROTEIN US9M"/>
    <property type="match status" value="1"/>
</dbReference>
<dbReference type="Pfam" id="PF00380">
    <property type="entry name" value="Ribosomal_S9"/>
    <property type="match status" value="1"/>
</dbReference>
<dbReference type="SUPFAM" id="SSF54211">
    <property type="entry name" value="Ribosomal protein S5 domain 2-like"/>
    <property type="match status" value="1"/>
</dbReference>
<dbReference type="PROSITE" id="PS00360">
    <property type="entry name" value="RIBOSOMAL_S9"/>
    <property type="match status" value="1"/>
</dbReference>
<reference key="1">
    <citation type="submission" date="2009-01" db="EMBL/GenBank/DDBJ databases">
        <title>Complete sequence of chromosome of Arthrobacter chlorophenolicus A6.</title>
        <authorList>
            <consortium name="US DOE Joint Genome Institute"/>
            <person name="Lucas S."/>
            <person name="Copeland A."/>
            <person name="Lapidus A."/>
            <person name="Glavina del Rio T."/>
            <person name="Tice H."/>
            <person name="Bruce D."/>
            <person name="Goodwin L."/>
            <person name="Pitluck S."/>
            <person name="Goltsman E."/>
            <person name="Clum A."/>
            <person name="Larimer F."/>
            <person name="Land M."/>
            <person name="Hauser L."/>
            <person name="Kyrpides N."/>
            <person name="Mikhailova N."/>
            <person name="Jansson J."/>
            <person name="Richardson P."/>
        </authorList>
    </citation>
    <scope>NUCLEOTIDE SEQUENCE [LARGE SCALE GENOMIC DNA]</scope>
    <source>
        <strain>ATCC 700700 / DSM 12829 / CIP 107037 / JCM 12360 / KCTC 9906 / NCIMB 13794 / A6</strain>
    </source>
</reference>
<feature type="chain" id="PRO_1000146429" description="Small ribosomal subunit protein uS9">
    <location>
        <begin position="1"/>
        <end position="168"/>
    </location>
</feature>
<feature type="region of interest" description="Disordered" evidence="2">
    <location>
        <begin position="1"/>
        <end position="36"/>
    </location>
</feature>
<feature type="compositionally biased region" description="Low complexity" evidence="2">
    <location>
        <begin position="1"/>
        <end position="11"/>
    </location>
</feature>
<keyword id="KW-0687">Ribonucleoprotein</keyword>
<keyword id="KW-0689">Ribosomal protein</keyword>
<proteinExistence type="inferred from homology"/>
<organism>
    <name type="scientific">Pseudarthrobacter chlorophenolicus (strain ATCC 700700 / DSM 12829 / CIP 107037 / JCM 12360 / KCTC 9906 / NCIMB 13794 / A6)</name>
    <name type="common">Arthrobacter chlorophenolicus</name>
    <dbReference type="NCBI Taxonomy" id="452863"/>
    <lineage>
        <taxon>Bacteria</taxon>
        <taxon>Bacillati</taxon>
        <taxon>Actinomycetota</taxon>
        <taxon>Actinomycetes</taxon>
        <taxon>Micrococcales</taxon>
        <taxon>Micrococcaceae</taxon>
        <taxon>Pseudarthrobacter</taxon>
    </lineage>
</organism>
<protein>
    <recommendedName>
        <fullName evidence="1">Small ribosomal subunit protein uS9</fullName>
    </recommendedName>
    <alternativeName>
        <fullName evidence="3">30S ribosomal protein S9</fullName>
    </alternativeName>
</protein>
<gene>
    <name evidence="1" type="primary">rpsI</name>
    <name type="ordered locus">Achl_2630</name>
</gene>
<comment type="similarity">
    <text evidence="1">Belongs to the universal ribosomal protein uS9 family.</text>
</comment>